<protein>
    <recommendedName>
        <fullName evidence="37">Potassium voltage-gated channel subfamily A member 1</fullName>
    </recommendedName>
    <alternativeName>
        <fullName evidence="35">MBK1</fullName>
    </alternativeName>
    <alternativeName>
        <fullName>MKI</fullName>
    </alternativeName>
    <alternativeName>
        <fullName evidence="36">Voltage-gated potassium channel subunit Kv1.1</fullName>
    </alternativeName>
</protein>
<reference key="1">
    <citation type="journal article" date="1990" name="Science">
        <title>A family of three mouse potassium channel genes with intronless coding regions.</title>
        <authorList>
            <person name="Chandy K.G."/>
            <person name="Williams C.B."/>
            <person name="Spencer R.H."/>
            <person name="Aguilar B.A."/>
            <person name="Ghanshani S."/>
            <person name="Tempel B.L."/>
            <person name="Gutman G.A."/>
        </authorList>
    </citation>
    <scope>NUCLEOTIDE SEQUENCE [GENOMIC DNA]</scope>
</reference>
<reference key="2">
    <citation type="journal article" date="1988" name="Nature">
        <title>Cloning of a probable potassium channel gene from mouse brain.</title>
        <authorList>
            <person name="Tempel B.L."/>
            <person name="Jan Y.N."/>
            <person name="Jan L.Y."/>
        </authorList>
    </citation>
    <scope>NUCLEOTIDE SEQUENCE [MRNA]</scope>
    <scope>TISSUE SPECIFICITY</scope>
    <source>
        <tissue>Brain</tissue>
    </source>
</reference>
<reference key="3">
    <citation type="journal article" date="1993" name="Nature">
        <title>Heteromultimeric K+ channels in terminal and juxtaparanodal regions of neurons.</title>
        <authorList>
            <person name="Wang H."/>
            <person name="Kunkel D.D."/>
            <person name="Martin T.M."/>
            <person name="Schwartzkroin P.A."/>
            <person name="Tempel B.L."/>
        </authorList>
    </citation>
    <scope>SUBUNIT</scope>
    <scope>INTERACTION WITH KCNA2</scope>
    <scope>SUBCELLULAR LOCATION</scope>
    <scope>TISSUE SPECIFICITY</scope>
</reference>
<reference key="4">
    <citation type="journal article" date="1994" name="J. Neurosci.">
        <title>Localization of Kv1.1 and Kv1.2, two K channel proteins, to synaptic terminals, somata, and dendrites in the mouse brain.</title>
        <authorList>
            <person name="Wang H."/>
            <person name="Kunkel D.D."/>
            <person name="Schwartzkroin P.A."/>
            <person name="Tempel B.L."/>
        </authorList>
    </citation>
    <scope>TISSUE SPECIFICITY</scope>
    <scope>SUBCELLULAR LOCATION</scope>
</reference>
<reference key="5">
    <citation type="journal article" date="1994" name="Mol. Pharmacol.">
        <title>Pharmacological characterization of five cloned voltage-gated K+ channels, types Kv1.1, 1.2, 1.3, 1.5, and 3.1, stably expressed in mammalian cell lines.</title>
        <authorList>
            <person name="Grissmer S."/>
            <person name="Nguyen A.N."/>
            <person name="Aiyar J."/>
            <person name="Hanson D.C."/>
            <person name="Mather R.J."/>
            <person name="Gutman G.A."/>
            <person name="Karmilowicz M.J."/>
            <person name="Auperin D.D."/>
            <person name="Chandy K.G."/>
        </authorList>
    </citation>
    <scope>FUNCTION</scope>
    <scope>TRANSPORTER ACTIVITY</scope>
    <scope>SUBCELLULAR LOCATION</scope>
    <scope>ACTIVITY REGULATION</scope>
</reference>
<reference key="6">
    <citation type="journal article" date="1996" name="Mamm. Genome">
        <title>Megencephaly: a new mouse mutation on chromosome 6 that causes hypertrophy of the brain.</title>
        <authorList>
            <person name="Donahue L.R."/>
            <person name="Cook S.A."/>
            <person name="Johnson K.R."/>
            <person name="Bronson R.T."/>
            <person name="Davisson M.T."/>
        </authorList>
    </citation>
    <scope>DISEASE</scope>
    <scope>FUNCTION</scope>
</reference>
<reference key="7">
    <citation type="journal article" date="1998" name="J. Neurosci.">
        <title>Temperature-sensitive neuromuscular transmission in Kv1.1 null mice: role of potassium channels under the myelin sheath in young nerves.</title>
        <authorList>
            <person name="Zhou L."/>
            <person name="Zhang C.L."/>
            <person name="Messing A."/>
            <person name="Chiu S.Y."/>
        </authorList>
    </citation>
    <scope>DISRUPTION PHENOTYPE</scope>
    <scope>FUNCTION</scope>
    <scope>TRANSPORTER ACTIVITY</scope>
    <scope>TISSUE SPECIFICITY</scope>
    <scope>SUBCELLULAR LOCATION</scope>
</reference>
<reference key="8">
    <citation type="journal article" date="1998" name="Neuron">
        <title>Deletion of the K(V)1.1 potassium channel causes epilepsy in mice.</title>
        <authorList>
            <person name="Smart S.L."/>
            <person name="Lopantsev V."/>
            <person name="Zhang C.L."/>
            <person name="Robbins C.A."/>
            <person name="Wang H."/>
            <person name="Chiu S.Y."/>
            <person name="Schwartzkroin P.A."/>
            <person name="Messing A."/>
            <person name="Tempel B.L."/>
        </authorList>
    </citation>
    <scope>DISRUPTION PHENOTYPE</scope>
    <scope>TISSUE SPECIFICITY</scope>
    <scope>SUBCELLULAR LOCATION</scope>
</reference>
<reference key="9">
    <citation type="journal article" date="1999" name="J. Neurosci.">
        <title>Specific alteration of spontaneous GABAergic inhibition in cerebellar Purkinje cells in mice lacking the potassium channel Kv1. 1.</title>
        <authorList>
            <person name="Zhang C.L."/>
            <person name="Messing A."/>
            <person name="Chiu S.Y."/>
        </authorList>
    </citation>
    <scope>DISRUPTION PHENOTYPE</scope>
    <scope>FUNCTION</scope>
</reference>
<reference key="10">
    <citation type="journal article" date="2003" name="Eur. J. Neurosci.">
        <title>Truncation of the Shaker-like voltage-gated potassium channel, Kv1.1, causes megencephaly.</title>
        <authorList>
            <person name="Petersson S."/>
            <person name="Persson A.S."/>
            <person name="Johansen J.E."/>
            <person name="Ingvar M."/>
            <person name="Nilsson J."/>
            <person name="Klement G."/>
            <person name="Arhem P."/>
            <person name="Schalling M."/>
            <person name="Lavebratt C."/>
        </authorList>
    </citation>
    <scope>DISEASE</scope>
    <scope>FUNCTION</scope>
    <scope>TISSUE SPECIFICITY</scope>
</reference>
<reference key="11">
    <citation type="journal article" date="2003" name="J. Physiol. (Lond.)">
        <title>Hyperexcitability and reduced low threshold potassium currents in auditory neurons of mice lacking the channel subunit Kv1.1.</title>
        <authorList>
            <person name="Brew H.M."/>
            <person name="Hallows J.L."/>
            <person name="Tempel B.L."/>
        </authorList>
    </citation>
    <scope>FUNCTION</scope>
    <scope>SUBCELLULAR LOCATION</scope>
    <scope>TISSUE SPECIFICITY</scope>
</reference>
<reference key="12">
    <citation type="journal article" date="2003" name="Science">
        <title>Nervous system targets of RNA editing identified by comparative genomics.</title>
        <authorList>
            <person name="Hoopengardner B."/>
            <person name="Bhalla T."/>
            <person name="Staber C."/>
            <person name="Reenan R."/>
        </authorList>
    </citation>
    <scope>RNA EDITING OF POSITION 400</scope>
</reference>
<reference key="13">
    <citation type="journal article" date="2004" name="Nat. Struct. Mol. Biol.">
        <title>Control of human potassium channel inactivation by editing of a small mRNA hairpin.</title>
        <authorList>
            <person name="Bhalla T."/>
            <person name="Rosenthal J.J."/>
            <person name="Holmgren M."/>
            <person name="Reenan R."/>
        </authorList>
    </citation>
    <scope>FUNCTION</scope>
    <scope>TRANSPORTER ACTIVITY</scope>
    <scope>SUBCELLULAR LOCATION</scope>
    <scope>SUBUNIT</scope>
    <scope>INTERACTION WITH KCNAB1</scope>
</reference>
<reference key="14">
    <citation type="journal article" date="2006" name="Mol. Cell. Proteomics">
        <title>Comprehensive identification of phosphorylation sites in postsynaptic density preparations.</title>
        <authorList>
            <person name="Trinidad J.C."/>
            <person name="Specht C.G."/>
            <person name="Thalhammer A."/>
            <person name="Schoepfer R."/>
            <person name="Burlingame A.L."/>
        </authorList>
    </citation>
    <scope>IDENTIFICATION BY MASS SPECTROMETRY [LARGE SCALE ANALYSIS]</scope>
    <source>
        <tissue>Brain</tissue>
    </source>
</reference>
<reference key="15">
    <citation type="journal article" date="2007" name="BMC Neurosci.">
        <title>Kv1.1 null mice have enlarged hippocampus and ventral cortex.</title>
        <authorList>
            <person name="Persson A.S."/>
            <person name="Westman E."/>
            <person name="Wang F.H."/>
            <person name="Khan F.H."/>
            <person name="Spenger C."/>
            <person name="Lavebratt C."/>
        </authorList>
    </citation>
    <scope>DISRUPTION PHENOTYPE</scope>
    <scope>FUNCTION</scope>
</reference>
<reference key="16">
    <citation type="journal article" date="2007" name="Hippocampus">
        <title>Lack of potassium channel induces proliferation and survival causing increased neurogenesis and two-fold hippocampus enlargement.</title>
        <authorList>
            <person name="Almgren M."/>
            <person name="Persson A.S."/>
            <person name="Fenghua C."/>
            <person name="Witgen B.M."/>
            <person name="Schalling M."/>
            <person name="Nyengaard J.R."/>
            <person name="Lavebratt C."/>
        </authorList>
    </citation>
    <scope>DISEASE</scope>
    <scope>FUNCTION</scope>
</reference>
<reference key="17">
    <citation type="journal article" date="2007" name="Mol. Neurobiol.">
        <title>Ionic channel function in action potential generation: current perspective.</title>
        <authorList>
            <person name="Baranauskas G."/>
        </authorList>
    </citation>
    <scope>REVIEW</scope>
</reference>
<reference key="18">
    <citation type="journal article" date="2009" name="J. Clin. Invest.">
        <title>A missense mutation in the Kv1.1 voltage-gated potassium channel-encoding gene KCNA1 is linked to human autosomal dominant hypomagnesemia.</title>
        <authorList>
            <person name="Glaudemans B."/>
            <person name="van der Wijst J."/>
            <person name="Scola R.H."/>
            <person name="Lorenzoni P.J."/>
            <person name="Heister A."/>
            <person name="van der Kemp A.W."/>
            <person name="Knoers N.V."/>
            <person name="Hoenderop J.G."/>
            <person name="Bindels R.J."/>
        </authorList>
    </citation>
    <scope>TISSUE SPECIFICITY</scope>
</reference>
<reference key="19">
    <citation type="journal article" date="2010" name="Cell">
        <title>A tissue-specific atlas of mouse protein phosphorylation and expression.</title>
        <authorList>
            <person name="Huttlin E.L."/>
            <person name="Jedrychowski M.P."/>
            <person name="Elias J.E."/>
            <person name="Goswami T."/>
            <person name="Rad R."/>
            <person name="Beausoleil S.A."/>
            <person name="Villen J."/>
            <person name="Haas W."/>
            <person name="Sowa M.E."/>
            <person name="Gygi S.P."/>
        </authorList>
    </citation>
    <scope>IDENTIFICATION BY MASS SPECTROMETRY [LARGE SCALE ANALYSIS]</scope>
    <source>
        <tissue>Brain</tissue>
    </source>
</reference>
<reference key="20">
    <citation type="journal article" date="2010" name="J. Neurosci.">
        <title>Kv1.1 potassium channel deficiency reveals brain-driven cardiac dysfunction as a candidate mechanism for sudden unexplained death in epilepsy.</title>
        <authorList>
            <person name="Glasscock E."/>
            <person name="Yoo J.W."/>
            <person name="Chen T.T."/>
            <person name="Klassen T.L."/>
            <person name="Noebels J.L."/>
        </authorList>
    </citation>
    <scope>DISRUPTION PHENOTYPE</scope>
    <scope>FUNCTION</scope>
    <scope>SUBCELLULAR LOCATION</scope>
    <scope>TISSUE SPECIFICITY</scope>
</reference>
<reference key="21">
    <citation type="journal article" date="2011" name="Eur. J. Neurosci.">
        <title>Acoustic startle hypersensitivity in Mceph mice and its effect on hippocampal excitability.</title>
        <authorList>
            <person name="Fisahn A."/>
            <person name="Lavebratt C."/>
            <person name="Canlon B."/>
        </authorList>
    </citation>
    <scope>DISEASE</scope>
    <scope>FUNCTION</scope>
    <scope>TISSUE SPECIFICITY</scope>
</reference>
<reference key="22">
    <citation type="journal article" date="2011" name="J. Biol. Chem.">
        <title>Contribution of Kv1.2 voltage-gated potassium channel to D2 autoreceptor regulation of axonal dopamine overflow.</title>
        <authorList>
            <person name="Fulton S."/>
            <person name="Thibault D."/>
            <person name="Mendez J.A."/>
            <person name="Lahaie N."/>
            <person name="Tirotta E."/>
            <person name="Borrelli E."/>
            <person name="Bouvier M."/>
            <person name="Tempel B.L."/>
            <person name="Trudeau L.E."/>
        </authorList>
    </citation>
    <scope>FUNCTION</scope>
    <scope>SUBCELLULAR LOCATION</scope>
    <scope>TISSUE SPECIFICITY</scope>
</reference>
<reference key="23">
    <citation type="journal article" date="2011" name="PLoS ONE">
        <title>Evidence for presence and functional effects of Kv1.1 channels in beta-cells: general survey and results from mceph/mceph mice.</title>
        <authorList>
            <person name="Ma Z."/>
            <person name="Lavebratt C."/>
            <person name="Almgren M."/>
            <person name="Portwood N."/>
            <person name="Forsberg L.E."/>
            <person name="Branstrom R."/>
            <person name="Berglund E."/>
            <person name="Falkmer S."/>
            <person name="Sundler F."/>
            <person name="Wierup N."/>
            <person name="Bjorklund A."/>
        </authorList>
    </citation>
    <scope>TISSUE SPECIFICITY</scope>
    <scope>DISEASE</scope>
    <scope>DISRUPTION PHENOTYPE</scope>
</reference>
<reference key="24">
    <citation type="journal article" date="2012" name="J. Neurosci.">
        <title>Kcna1 gene deletion lowers the behavioral sensitivity of mice to small changes in sound location and increases asynchronous brainstem auditory evoked potentials but does not affect hearing thresholds.</title>
        <authorList>
            <person name="Allen P.D."/>
            <person name="Ison J.R."/>
        </authorList>
    </citation>
    <scope>DISRUPTION PHENOTYPE</scope>
    <scope>FUNCTION</scope>
</reference>
<reference key="25">
    <citation type="journal article" date="2012" name="J. Physiol. (Lond.)">
        <title>Kv1.1-dependent control of hippocampal neuron number as revealed by mosaic analysis with double markers.</title>
        <authorList>
            <person name="Yang S.B."/>
            <person name="Mclemore K.D."/>
            <person name="Tasic B."/>
            <person name="Luo L."/>
            <person name="Jan Y.N."/>
            <person name="Jan L.Y."/>
        </authorList>
    </citation>
    <scope>FUNCTION</scope>
</reference>
<reference key="26">
    <citation type="journal article" date="2012" name="J. Physiol. (Lond.)">
        <title>Transcompartmental reversal of single fibre hyperexcitability in juxtaparanodal Kv1.1-deficient vagus nerve axons by activation of nodal KCNQ channels.</title>
        <authorList>
            <person name="Glasscock E."/>
            <person name="Qian J."/>
            <person name="Kole M.J."/>
            <person name="Noebels J.L."/>
        </authorList>
    </citation>
    <scope>FUNCTION</scope>
    <scope>TISSUE SPECIFICITY</scope>
</reference>
<reference key="27">
    <citation type="journal article" date="2012" name="Nat. Neurosci.">
        <title>Neuregulin 1 regulates excitability of fast-spiking neurons through Kv1.1 and acts in epilepsy.</title>
        <authorList>
            <person name="Li K.X."/>
            <person name="Lu Y.M."/>
            <person name="Xu Z.H."/>
            <person name="Zhang J."/>
            <person name="Zhu J.M."/>
            <person name="Zhang J.M."/>
            <person name="Cao S.X."/>
            <person name="Chen X.J."/>
            <person name="Chen Z."/>
            <person name="Luo J.H."/>
            <person name="Duan S."/>
            <person name="Li X.M."/>
        </authorList>
    </citation>
    <scope>FUNCTION</scope>
    <scope>PHOSPHORYLATION</scope>
    <scope>SUBCELLULAR LOCATION</scope>
    <scope>TISSUE SPECIFICITY</scope>
</reference>
<reference key="28">
    <citation type="journal article" date="2013" name="Neurobiol. Dis.">
        <title>Loss of the Kv1.1 potassium channel promotes pathologic sharp waves and high frequency oscillations in in vitro hippocampal slices.</title>
        <authorList>
            <person name="Simeone T.A."/>
            <person name="Simeone K.A."/>
            <person name="Samson K.K."/>
            <person name="Kim D.Y."/>
            <person name="Rho J.M."/>
        </authorList>
    </citation>
    <scope>FUNCTION</scope>
</reference>
<reference key="29">
    <citation type="journal article" date="2013" name="Neuron">
        <title>Kv1.1 channels act as mechanical brake in the senses of touch and pain.</title>
        <authorList>
            <person name="Hao J."/>
            <person name="Padilla F."/>
            <person name="Dandonneau M."/>
            <person name="Lavebratt C."/>
            <person name="Lesage F."/>
            <person name="Noel J."/>
            <person name="Delmas P."/>
        </authorList>
    </citation>
    <scope>FUNCTION</scope>
    <scope>DISEASE</scope>
    <scope>TISSUE SPECIFICITY</scope>
</reference>
<reference key="30">
    <citation type="journal article" date="2014" name="Epilepsia">
        <title>The Kv1.1 null mouse, a model of sudden unexpected death in epilepsy (SUDEP).</title>
        <authorList>
            <person name="Moore B.M."/>
            <person name="Jerry Jou C."/>
            <person name="Tatalovic M."/>
            <person name="Kaufman E.S."/>
            <person name="Kline D.D."/>
            <person name="Kunze D.L."/>
        </authorList>
    </citation>
    <scope>DISRUPTION PHENOTYPE</scope>
    <scope>FUNCTION</scope>
</reference>
<reference key="31">
    <citation type="journal article" date="2014" name="Kidney Int.">
        <title>Ankyrin-3 is a novel binding partner of the voltage-gated potassium channel Kv1.1 implicated in renal magnesium handling.</title>
        <authorList>
            <person name="San-Cristobal P."/>
            <person name="Lainez S."/>
            <person name="Dimke H."/>
            <person name="de Graaf M.J."/>
            <person name="Hoenderop J.G."/>
            <person name="Bindels R.J."/>
        </authorList>
    </citation>
    <scope>INTERACTION WITH ANK3</scope>
    <scope>INDUCTION BY MAGNESIUM</scope>
</reference>
<reference key="32">
    <citation type="journal article" date="2015" name="J. Neurosci.">
        <title>Selective Loss of Presynaptic Potassium Channel Clusters at the Cerebellar Basket Cell Terminal Pinceau in Adam11 Mutants Reveals Their Role in Ephaptic Control of Purkinje Cell Firing.</title>
        <authorList>
            <person name="Kole M.J."/>
            <person name="Qian J."/>
            <person name="Waase M.P."/>
            <person name="Klassen T.L."/>
            <person name="Chen T.T."/>
            <person name="Augustine G.J."/>
            <person name="Noebels J.L."/>
        </authorList>
    </citation>
    <scope>INTERACTION WITH ADAM11</scope>
    <scope>SUBCELLULAR LOCATION</scope>
    <scope>TISSUE SPECIFICITY</scope>
</reference>
<comment type="function">
    <text evidence="2 4 7 8 11 12 13 15 16 18 19 20 21 22 23 24 27 29 32 33 34">Voltage-gated potassium channel that mediates transmembrane potassium transport in excitable membranes, primarily in the brain and the central nervous system, but also in the kidney. Contributes to the regulation of the membrane potential and nerve signaling, and prevents neuronal hyperexcitability (PubMed:10191303, PubMed:12611922, PubMed:21966978, PubMed:22158511, PubMed:23473320, PubMed:9581771, PubMed:9736643). Forms tetrameric potassium-selective channels through which potassium ions pass in accordance with their electrochemical gradient. The channel alternates between opened and closed conformations in response to the voltage difference across the membrane (PubMed:15361858). Can form functional homotetrameric channels and heterotetrameric channels that contain variable proportions of KCNA1, KCNA2, KCNA4, KCNA5, KCNA6, KCNA7, and possibly other family members as well; channel properties depend on the type of alpha subunits that are part of the channel. Channel properties are modulated by cytoplasmic beta subunits that regulate the subcellular location of the alpha subunits and promote rapid inactivation of delayed rectifier potassium channels (PubMed:15361858). In vivo, membranes probably contain a mixture of heteromeric potassium channel complexes, making it difficult to assign currents observed in intact tissues to any particular potassium channel family member. Homotetrameric KCNA1 forms a delayed-rectifier potassium channel that opens in response to membrane depolarization, followed by slow spontaneous channel closure (PubMed:15361858, PubMed:7517498). In contrast, a heterotetrameric channel formed by KCNA1 and KCNA4 shows rapid inactivation (By similarity). Regulates neuronal excitability in hippocampus, especially in mossy fibers and medial perforant path axons, preventing neuronal hyperexcitability (PubMed:23466697). May function as down-stream effector for G protein-coupled receptors and inhibit GABAergic inputs to basolateral amygdala neurons (By similarity). May contribute to the regulation of neurotransmitter release, such as gamma-aminobutyric acid (GABA) release (By similarity). Plays a role in regulating the generation of action potentials and preventing hyperexcitability in myelinated axons of the vagus nerve, and thereby contributes to the regulation of heart contraction (PubMed:20392939, PubMed:22641786, PubMed:25377007). Required for normal neuromuscular responses (PubMed:9736643). Regulates the frequency of neuronal action potential firing in response to mechanical stimuli, and plays a role in the perception of pain caused by mechanical stimuli, but does not play a role in the perception of pain due to heat stimuli (PubMed:23473320). Required for normal responses to auditory stimuli and precise location of sound sources, but not for sound perception (PubMed:21966978, PubMed:22396426). The use of toxins that block specific channels suggest that it contributes to the regulation of the axonal release of the neurotransmitter dopamine (PubMed:21233214). Required for normal postnatal brain development and normal proliferation of neuronal precursor cells in the brain (PubMed:17250763, PubMed:17315199, PubMed:22411008, PubMed:8995755). Plays a role in the reabsorption of Mg(2+) in the distal convoluted tubules in the kidney and in magnesium ion homeostasis, probably via its effect on the membrane potential (By similarity).</text>
</comment>
<comment type="catalytic activity">
    <reaction evidence="11 29 34">
        <text>K(+)(in) = K(+)(out)</text>
        <dbReference type="Rhea" id="RHEA:29463"/>
        <dbReference type="ChEBI" id="CHEBI:29103"/>
    </reaction>
</comment>
<comment type="activity regulation">
    <text evidence="29">Inhibited by 4-aminopyridine (4-AP), tetraethylammonium (TEA) and dendrotoxin (DTX), but not by charybdotoxin (CTX).</text>
</comment>
<comment type="subunit">
    <text evidence="2 4 11 25 28 31 37">Homotetramer and heterotetramer with other channel-forming alpha subunits, such as KCNA2, KCNA4, KCNA5, KCNA6 and KCNA7 (PubMed:8361541). Channel activity is regulated by interaction with the beta subunits KCNAB1 and KCNAB2 (PubMed:15361858). Identified in a complex with KCNA2 and KCNAB2. Interacts (via C-terminus) with the PDZ domains of DLG1, DLG2 and DLG4 (By similarity). Interacts with LGI1 within a complex containing LGI1, KCNA4 and KCNAB1 (By similarity). Interacts (via N-terminus) with STX1A; this promotes channel inactivation (By similarity). Interacts (via N-terminus) with the heterodimer formed by GNB1 and GNG2; this promotes channel inactivation (By similarity). Can interact simultaneously with STX1A and the heterodimer formed by GNB1 and GNG2 (By similarity). Interacts (via cytoplasmic N-terminal domain) with KCNRG; this inhibits channel activity (By similarity). Interacts with ANK3; this inhibits channel activity (PubMed:23903368). Interacts with ADAM11 (PubMed:26269648).</text>
</comment>
<comment type="subcellular location">
    <subcellularLocation>
        <location evidence="11 29">Cell membrane</location>
        <topology evidence="37">Multi-pass membrane protein</topology>
    </subcellularLocation>
    <subcellularLocation>
        <location evidence="15 16 28 30 31 33 34">Cell projection</location>
        <location evidence="15 16 28 30 31 33 34">Axon</location>
    </subcellularLocation>
    <subcellularLocation>
        <location evidence="19">Membrane</location>
    </subcellularLocation>
    <subcellularLocation>
        <location evidence="8 28 30">Perikaryon</location>
    </subcellularLocation>
    <subcellularLocation>
        <location evidence="30">Cell projection</location>
        <location evidence="30">Dendrite</location>
    </subcellularLocation>
    <subcellularLocation>
        <location evidence="30">Cell junction</location>
    </subcellularLocation>
    <subcellularLocation>
        <location evidence="30">Synapse</location>
    </subcellularLocation>
    <subcellularLocation>
        <location evidence="8">Cytoplasmic vesicle</location>
    </subcellularLocation>
    <subcellularLocation>
        <location evidence="2">Endoplasmic reticulum</location>
    </subcellularLocation>
    <subcellularLocation>
        <location evidence="2">Presynaptic cell membrane</location>
    </subcellularLocation>
    <subcellularLocation>
        <location evidence="16">Presynapse</location>
    </subcellularLocation>
    <text evidence="2 16">Homotetrameric KCNA1 is primarily located in the endoplasmic reticulum. Interaction with KCNA2 and KCNAB2 or with KCNA4 and KCNAB2 promotes expression at the cell membrane (By similarity).</text>
</comment>
<comment type="tissue specificity">
    <text evidence="8 10 14 15 16 17 18 19 22 24 26 28 30 31 33 34">Detected in brain (PubMed:21483673, PubMed:22158511, PubMed:2451788, PubMed:9581771). Expressed in cerebellar cortex basket cell terminals, the area surround the Purkinje cell soma, and the pinceaux expansions encircling the axon initial segment (at protein level) (PubMed:26269648). Detected in the juxtaparanodal regions of the nodes of Ranvier in myelinated axons (PubMed:8046438, PubMed:8361541). Detected in the paranodal region in sciatic nerve (PubMed:9736643). Detected on cell bodies in cerebellum, dorsal and ventral cochlear nucleus, pontine reticular nucleus, mesencephalic trigeminal nucleus, motor trigeminal nucleus and the pricipal sensory trigeminal nucleus (PubMed:8046438). Detected in terminal fields of basket cells in the cerebellum corpus medullare (PubMed:8046438, PubMed:8361541, PubMed:9581771). Detected in hippocampus CA3 pyramidal neurons and in the hilus and stratum moleculare of the dentate gyrus (PubMed:14686897, PubMed:8046438, PubMed:9581771). Detected in the central nucleus and the external nucleus of the inferior colliculus (PubMed:21966978, PubMed:8046438). Detected in fiber tracts in the optic tract, external medullary lamina, stria terminalis, medulla, ventral pallidum and substantia nigra (PubMed:8046438). Detected in neurons from dorsal root ganglion (PubMed:23473320). Detected in neurons in the medial nucleus of the trapezoid body (PubMed:12611922). Detected in midbrain dopamine neuron axon terminals (PubMed:21233214). Detected in brain cortex (PubMed:14686897, PubMed:8046438). Detected in brainstem (PubMed:8361541). Detected in juxtaparanodal regions of the nodes of Ranvier in the vagus nerve, but only at very low levels in the heart (PubMed:20392939, PubMed:22641786). Detected in the islet of Langerhans (PubMed:21483673). Detected at the luminal membrane in distal convoluted tubules in the kidney (at protein level) (PubMed:19307729). Detected in hippocampus, thalamus, neocortex and ventral brain cortex, including the piriform and entorhinal cortex and the amygdala (PubMed:14686897). Detected in midbrain dopamine neurons (PubMed:21233214). Detected in heart atrium, ventricle, sinoatrial node and atrioventricular node (PubMed:20392939).</text>
</comment>
<comment type="induction">
    <text evidence="25">Down-regulated by high dietary Mg(2+) levels.</text>
</comment>
<comment type="domain">
    <text evidence="2">The cytoplasmic N-terminus is important for tetramerization and for interaction with the beta subunits that promote rapid channel closure.</text>
</comment>
<comment type="domain">
    <text evidence="3">The transmembrane segment S4 functions as a voltage-sensor and is characterized by a series of positively charged amino acids at every third position. Channel opening and closing is effected by a conformation change that affects the position and orientation of the voltage-sensor paddle formed by S3 and S4 within the membrane. A transmembrane electric field that is positive inside would push the positively charged S4 segment outwards, thereby opening the pore, while a field that is negative inside would pull the S4 segment inwards and close the pore. Changes in the position and orientation of S4 are then transmitted to the activation gate formed by the inner helix bundle via the S4-S5 linker region.</text>
</comment>
<comment type="PTM">
    <text evidence="2">N-glycosylated.</text>
</comment>
<comment type="PTM">
    <text evidence="4">Palmitoylated on Cys-243; which may be required for membrane targeting.</text>
</comment>
<comment type="PTM">
    <text evidence="4 19">Phosphorylated on tyrosine residues. Phosphorylation increases in response to NRG1; this inhibits channel activity (PubMed:22158511). Phosphorylation at Ser-446 regulates channel activity by down-regulating expression at the cell membrane (By similarity).</text>
</comment>
<comment type="RNA editing">
    <location>
        <position position="400" evidence="9"/>
    </location>
    <text>Partially edited. RNA editing varies from 35% in the frontal cortex to 75% in the spinal cord.</text>
</comment>
<comment type="disease">
    <text evidence="10 13 17 18 32">A spontaneous mutation leading to a frameshift and truncation of Kcna2 causes megencephaly with a 25% increase of brain weight relative to wild-type. Especially the hippocampus shows increased proliferation of neurons and astrocytes, leading to increased brain volume (PubMed:17315199). Mutant mice appear normal at birth. After 3-4 weeks, they display low body weight, a subtle shakiness in their gait, a preference for a strange sitting position that is maintained for periods ranging from 30 seconds to several minutes, excessive lacrimation and acoustic startle hypersensitivity (PubMed:21966978, PubMed:8995755). The increase in the acoustic startle response is down-regulated by treatment with the anti-epileptic drug valproate (PubMed:21966978). Mutant mice display an abnormal electro-encephalogram with single spikes and waves, when anesthesized (PubMed:21966978). The electric activity of mossy cells from the dentate hilus region is altered and shows increased firing of action potentials, probably due to the absence of functional Kcna1 channels (PubMed:14686897). Heterozygotes show mechanical allodynia, but no increased sensitivity to heat (PubMed:23473320). Homozygotes show no alteration of the islet of Langerhans structure, of the basal levels of insulin secretion and blood glucose levels (PubMed:21483673). Compared to wild-type, they display moderately increased insulin secretion in response to a glucose stimulus (PubMed:21483673). Besides, the frequency of beta cell action potentials is increased (PubMed:21483673).</text>
</comment>
<comment type="disruption phenotype">
    <text evidence="7 12 15 17 20 27 33 34">Mice are born at the expected Mendelian rate. After three weeks, mice begin to display episodic eye blinking, twitching of whiskers, forlimb padding, arrested motion and a hyperstartle response. About 50% of the homozygotes die between the third and the fifth week after birth. Surviving mice continue to display spontaneous seizures occurring once or twice every hour throughout adult life (PubMed:9581771). The fecundity of homozygotes is extremely low (PubMed:9581771). Mutant mice display interictal cardiac abnormalities, including a fivefold increase in atrioventricular conduction blocks, brachycardia and premature ventricular contractions; this may lead to sudden unexplained death in epilepsy (PubMed:20392939). Mutant mice have slightly elevated heart rates; they all have a reduced livespan and are subject to sudden death after presumed seizure activity and sinus bradycardia (PubMed:25377007). About 70% of the mutant mice have an enlarged hippocampus and ventral brain cortex (PubMed:17250763). Mutant mice show a temperature-sensitive alteration in neuromuscular transmission, causing nerve hyperexcitability when exposed to cold and delayed repetitive discharge after a single nerve stimulation (PubMed:9736643). After 2 minutes of swimming in cold water, mutant mice have impaired motor control; they fall over when placed on dry ground and exhibit severe neuromyotonia with violent tremors that decrease with time, leading to full recovery after twenty minutes (PubMed:9736643). Mutant mice have an increased frequency of spontaneous postsynaptic currents in Purkinje cells, impaired ability to maintain their balance on a thin stationary rod, but perform as well as wild-type on a rotarod (PubMed:10191303). Mutant mice have a normal hearing threshold, but altered brainstem responses to auditory stimuli and reduced sensitivity to small changes in sound location (PubMed:22396426). Mutant mice display no alteration of the islet of Langerhans, but have reduced blood glucose levels and increased insulin secretion in response to a glucose stimulus (PubMed:21483673).</text>
</comment>
<comment type="miscellaneous">
    <text evidence="38">The delay or D-type current observed in hippocampus pyramidal neurons is probably mediated by potassium channels containing KCNA2 plus KCNA1 or other family members. It is activated at about -50 mV, i.e. below the action potential threshold, and is characterized by slow inactivation, extremely slow recovery from inactivation, sensitivity to dendrotoxin (DTX) and to 4-aminopyridine (4-AP).</text>
</comment>
<comment type="similarity">
    <text evidence="37">Belongs to the potassium channel family. A (Shaker) (TC 1.A.1.2) subfamily. Kv1.1/KCNA1 sub-subfamily.</text>
</comment>
<dbReference type="EMBL" id="M30439">
    <property type="protein sequence ID" value="AAA39711.1"/>
    <property type="molecule type" value="Genomic_DNA"/>
</dbReference>
<dbReference type="EMBL" id="Y00305">
    <property type="protein sequence ID" value="CAA68408.1"/>
    <property type="molecule type" value="mRNA"/>
</dbReference>
<dbReference type="CCDS" id="CCDS20555.1"/>
<dbReference type="PIR" id="A40090">
    <property type="entry name" value="A40090"/>
</dbReference>
<dbReference type="PIR" id="S09042">
    <property type="entry name" value="S09042"/>
</dbReference>
<dbReference type="RefSeq" id="NP_034725.3">
    <property type="nucleotide sequence ID" value="NM_010595.3"/>
</dbReference>
<dbReference type="SMR" id="P16388"/>
<dbReference type="BioGRID" id="200876">
    <property type="interactions" value="15"/>
</dbReference>
<dbReference type="FunCoup" id="P16388">
    <property type="interactions" value="379"/>
</dbReference>
<dbReference type="IntAct" id="P16388">
    <property type="interactions" value="2"/>
</dbReference>
<dbReference type="STRING" id="10090.ENSMUSP00000055225"/>
<dbReference type="ChEMBL" id="CHEMBL2429705"/>
<dbReference type="DrugCentral" id="P16388"/>
<dbReference type="GuidetoPHARMACOLOGY" id="538"/>
<dbReference type="GlyCosmos" id="P16388">
    <property type="glycosylation" value="1 site, No reported glycans"/>
</dbReference>
<dbReference type="GlyGen" id="P16388">
    <property type="glycosylation" value="3 sites, 1 N-linked glycan (1 site), 1 O-linked glycan (1 site)"/>
</dbReference>
<dbReference type="iPTMnet" id="P16388"/>
<dbReference type="PhosphoSitePlus" id="P16388"/>
<dbReference type="SwissPalm" id="P16388"/>
<dbReference type="PaxDb" id="10090-ENSMUSP00000055225"/>
<dbReference type="PeptideAtlas" id="P16388"/>
<dbReference type="ProteomicsDB" id="269195"/>
<dbReference type="ABCD" id="P16388">
    <property type="antibodies" value="3 sequenced antibodies"/>
</dbReference>
<dbReference type="Antibodypedia" id="22315">
    <property type="antibodies" value="448 antibodies from 35 providers"/>
</dbReference>
<dbReference type="DNASU" id="16485"/>
<dbReference type="Ensembl" id="ENSMUST00000055168.5">
    <property type="protein sequence ID" value="ENSMUSP00000055225.4"/>
    <property type="gene ID" value="ENSMUSG00000047976.5"/>
</dbReference>
<dbReference type="Ensembl" id="ENSMUST00000203094.2">
    <property type="protein sequence ID" value="ENSMUSP00000144947.2"/>
    <property type="gene ID" value="ENSMUSG00000047976.5"/>
</dbReference>
<dbReference type="GeneID" id="16485"/>
<dbReference type="KEGG" id="mmu:16485"/>
<dbReference type="UCSC" id="uc009dvb.1">
    <property type="organism name" value="mouse"/>
</dbReference>
<dbReference type="AGR" id="MGI:96654"/>
<dbReference type="CTD" id="3736"/>
<dbReference type="MGI" id="MGI:96654">
    <property type="gene designation" value="Kcna1"/>
</dbReference>
<dbReference type="VEuPathDB" id="HostDB:ENSMUSG00000047976"/>
<dbReference type="eggNOG" id="KOG1545">
    <property type="taxonomic scope" value="Eukaryota"/>
</dbReference>
<dbReference type="GeneTree" id="ENSGT00940000158576"/>
<dbReference type="HOGENOM" id="CLU_011722_4_0_1"/>
<dbReference type="InParanoid" id="P16388"/>
<dbReference type="OMA" id="PQEGSYP"/>
<dbReference type="OrthoDB" id="415460at2759"/>
<dbReference type="PhylomeDB" id="P16388"/>
<dbReference type="TreeFam" id="TF313103"/>
<dbReference type="Reactome" id="R-MMU-1296072">
    <property type="pathway name" value="Voltage gated Potassium channels"/>
</dbReference>
<dbReference type="BioGRID-ORCS" id="16485">
    <property type="hits" value="3 hits in 78 CRISPR screens"/>
</dbReference>
<dbReference type="CD-CODE" id="CE726F99">
    <property type="entry name" value="Postsynaptic density"/>
</dbReference>
<dbReference type="PRO" id="PR:P16388"/>
<dbReference type="Proteomes" id="UP000000589">
    <property type="component" value="Chromosome 6"/>
</dbReference>
<dbReference type="RNAct" id="P16388">
    <property type="molecule type" value="protein"/>
</dbReference>
<dbReference type="Bgee" id="ENSMUSG00000047976">
    <property type="expression patterns" value="Expressed in sciatic nerve and 137 other cell types or tissues"/>
</dbReference>
<dbReference type="GO" id="GO:0070161">
    <property type="term" value="C:anchoring junction"/>
    <property type="evidence" value="ECO:0007669"/>
    <property type="project" value="UniProtKB-SubCell"/>
</dbReference>
<dbReference type="GO" id="GO:0030424">
    <property type="term" value="C:axon"/>
    <property type="evidence" value="ECO:0000314"/>
    <property type="project" value="UniProtKB"/>
</dbReference>
<dbReference type="GO" id="GO:0043194">
    <property type="term" value="C:axon initial segment"/>
    <property type="evidence" value="ECO:0000314"/>
    <property type="project" value="MGI"/>
</dbReference>
<dbReference type="GO" id="GO:0043679">
    <property type="term" value="C:axon terminus"/>
    <property type="evidence" value="ECO:0000314"/>
    <property type="project" value="UniProtKB"/>
</dbReference>
<dbReference type="GO" id="GO:0030054">
    <property type="term" value="C:cell junction"/>
    <property type="evidence" value="ECO:0000314"/>
    <property type="project" value="UniProtKB"/>
</dbReference>
<dbReference type="GO" id="GO:0009986">
    <property type="term" value="C:cell surface"/>
    <property type="evidence" value="ECO:0000314"/>
    <property type="project" value="MGI"/>
</dbReference>
<dbReference type="GO" id="GO:0031410">
    <property type="term" value="C:cytoplasmic vesicle"/>
    <property type="evidence" value="ECO:0007669"/>
    <property type="project" value="UniProtKB-KW"/>
</dbReference>
<dbReference type="GO" id="GO:0005829">
    <property type="term" value="C:cytosol"/>
    <property type="evidence" value="ECO:0000250"/>
    <property type="project" value="UniProtKB"/>
</dbReference>
<dbReference type="GO" id="GO:0030425">
    <property type="term" value="C:dendrite"/>
    <property type="evidence" value="ECO:0000314"/>
    <property type="project" value="UniProtKB"/>
</dbReference>
<dbReference type="GO" id="GO:0005783">
    <property type="term" value="C:endoplasmic reticulum"/>
    <property type="evidence" value="ECO:0000250"/>
    <property type="project" value="UniProtKB"/>
</dbReference>
<dbReference type="GO" id="GO:0044224">
    <property type="term" value="C:juxtaparanode region of axon"/>
    <property type="evidence" value="ECO:0000314"/>
    <property type="project" value="UniProtKB"/>
</dbReference>
<dbReference type="GO" id="GO:0043025">
    <property type="term" value="C:neuronal cell body"/>
    <property type="evidence" value="ECO:0000314"/>
    <property type="project" value="UniProtKB"/>
</dbReference>
<dbReference type="GO" id="GO:0033270">
    <property type="term" value="C:paranode region of axon"/>
    <property type="evidence" value="ECO:0000314"/>
    <property type="project" value="UniProtKB"/>
</dbReference>
<dbReference type="GO" id="GO:0043204">
    <property type="term" value="C:perikaryon"/>
    <property type="evidence" value="ECO:0000314"/>
    <property type="project" value="UniProtKB"/>
</dbReference>
<dbReference type="GO" id="GO:0005886">
    <property type="term" value="C:plasma membrane"/>
    <property type="evidence" value="ECO:0000315"/>
    <property type="project" value="UniProtKB"/>
</dbReference>
<dbReference type="GO" id="GO:0042734">
    <property type="term" value="C:presynaptic membrane"/>
    <property type="evidence" value="ECO:0000250"/>
    <property type="project" value="UniProtKB"/>
</dbReference>
<dbReference type="GO" id="GO:0045202">
    <property type="term" value="C:synapse"/>
    <property type="evidence" value="ECO:0000314"/>
    <property type="project" value="UniProtKB"/>
</dbReference>
<dbReference type="GO" id="GO:0008076">
    <property type="term" value="C:voltage-gated potassium channel complex"/>
    <property type="evidence" value="ECO:0000314"/>
    <property type="project" value="UniProtKB"/>
</dbReference>
<dbReference type="GO" id="GO:0005251">
    <property type="term" value="F:delayed rectifier potassium channel activity"/>
    <property type="evidence" value="ECO:0000314"/>
    <property type="project" value="UniProtKB"/>
</dbReference>
<dbReference type="GO" id="GO:0097718">
    <property type="term" value="F:disordered domain specific binding"/>
    <property type="evidence" value="ECO:0007669"/>
    <property type="project" value="Ensembl"/>
</dbReference>
<dbReference type="GO" id="GO:0007420">
    <property type="term" value="P:brain development"/>
    <property type="evidence" value="ECO:0000315"/>
    <property type="project" value="UniProtKB"/>
</dbReference>
<dbReference type="GO" id="GO:0010644">
    <property type="term" value="P:cell communication by electrical coupling"/>
    <property type="evidence" value="ECO:0000250"/>
    <property type="project" value="UniProtKB"/>
</dbReference>
<dbReference type="GO" id="GO:0071286">
    <property type="term" value="P:cellular response to magnesium ion"/>
    <property type="evidence" value="ECO:0000315"/>
    <property type="project" value="UniProtKB"/>
</dbReference>
<dbReference type="GO" id="GO:0050966">
    <property type="term" value="P:detection of mechanical stimulus involved in sensory perception of pain"/>
    <property type="evidence" value="ECO:0000315"/>
    <property type="project" value="UniProtKB"/>
</dbReference>
<dbReference type="GO" id="GO:0050976">
    <property type="term" value="P:detection of mechanical stimulus involved in sensory perception of touch"/>
    <property type="evidence" value="ECO:0000315"/>
    <property type="project" value="UniProtKB"/>
</dbReference>
<dbReference type="GO" id="GO:0021766">
    <property type="term" value="P:hippocampus development"/>
    <property type="evidence" value="ECO:0000315"/>
    <property type="project" value="UniProtKB"/>
</dbReference>
<dbReference type="GO" id="GO:0010960">
    <property type="term" value="P:magnesium ion homeostasis"/>
    <property type="evidence" value="ECO:0000250"/>
    <property type="project" value="UniProtKB"/>
</dbReference>
<dbReference type="GO" id="GO:0086011">
    <property type="term" value="P:membrane repolarization during action potential"/>
    <property type="evidence" value="ECO:0000314"/>
    <property type="project" value="UniProtKB"/>
</dbReference>
<dbReference type="GO" id="GO:0007405">
    <property type="term" value="P:neuroblast proliferation"/>
    <property type="evidence" value="ECO:0000315"/>
    <property type="project" value="UniProtKB"/>
</dbReference>
<dbReference type="GO" id="GO:0050905">
    <property type="term" value="P:neuromuscular process"/>
    <property type="evidence" value="ECO:0000315"/>
    <property type="project" value="UniProtKB"/>
</dbReference>
<dbReference type="GO" id="GO:0019228">
    <property type="term" value="P:neuronal action potential"/>
    <property type="evidence" value="ECO:0000315"/>
    <property type="project" value="UniProtKB"/>
</dbReference>
<dbReference type="GO" id="GO:0023041">
    <property type="term" value="P:neuronal signal transduction"/>
    <property type="evidence" value="ECO:0000250"/>
    <property type="project" value="UniProtKB"/>
</dbReference>
<dbReference type="GO" id="GO:0071805">
    <property type="term" value="P:potassium ion transmembrane transport"/>
    <property type="evidence" value="ECO:0000314"/>
    <property type="project" value="UniProtKB"/>
</dbReference>
<dbReference type="GO" id="GO:0051260">
    <property type="term" value="P:protein homooligomerization"/>
    <property type="evidence" value="ECO:0007669"/>
    <property type="project" value="InterPro"/>
</dbReference>
<dbReference type="GO" id="GO:0042391">
    <property type="term" value="P:regulation of membrane potential"/>
    <property type="evidence" value="ECO:0000250"/>
    <property type="project" value="UniProtKB"/>
</dbReference>
<dbReference type="GO" id="GO:0006937">
    <property type="term" value="P:regulation of muscle contraction"/>
    <property type="evidence" value="ECO:0000250"/>
    <property type="project" value="UniProtKB"/>
</dbReference>
<dbReference type="GO" id="GO:0001964">
    <property type="term" value="P:startle response"/>
    <property type="evidence" value="ECO:0000315"/>
    <property type="project" value="UniProtKB"/>
</dbReference>
<dbReference type="FunFam" id="1.10.287.70:FF:000002">
    <property type="entry name" value="Potassium voltage-gated channel subfamily a member"/>
    <property type="match status" value="1"/>
</dbReference>
<dbReference type="FunFam" id="3.30.710.10:FF:000007">
    <property type="entry name" value="Potassium voltage-gated channel subfamily A member 2"/>
    <property type="match status" value="1"/>
</dbReference>
<dbReference type="FunFam" id="1.20.120.350:FF:000021">
    <property type="entry name" value="Potassium voltage-gated channel subfamily A member 3"/>
    <property type="match status" value="1"/>
</dbReference>
<dbReference type="Gene3D" id="1.10.287.70">
    <property type="match status" value="1"/>
</dbReference>
<dbReference type="Gene3D" id="3.30.710.10">
    <property type="entry name" value="Potassium Channel Kv1.1, Chain A"/>
    <property type="match status" value="1"/>
</dbReference>
<dbReference type="Gene3D" id="1.20.120.350">
    <property type="entry name" value="Voltage-gated potassium channels. Chain C"/>
    <property type="match status" value="1"/>
</dbReference>
<dbReference type="InterPro" id="IPR000210">
    <property type="entry name" value="BTB/POZ_dom"/>
</dbReference>
<dbReference type="InterPro" id="IPR005821">
    <property type="entry name" value="Ion_trans_dom"/>
</dbReference>
<dbReference type="InterPro" id="IPR003968">
    <property type="entry name" value="K_chnl_volt-dep_Kv"/>
</dbReference>
<dbReference type="InterPro" id="IPR003972">
    <property type="entry name" value="K_chnl_volt-dep_Kv1"/>
</dbReference>
<dbReference type="InterPro" id="IPR004048">
    <property type="entry name" value="K_chnl_volt-dep_Kv1.1"/>
</dbReference>
<dbReference type="InterPro" id="IPR011333">
    <property type="entry name" value="SKP1/BTB/POZ_sf"/>
</dbReference>
<dbReference type="InterPro" id="IPR003131">
    <property type="entry name" value="T1-type_BTB"/>
</dbReference>
<dbReference type="InterPro" id="IPR028325">
    <property type="entry name" value="VG_K_chnl"/>
</dbReference>
<dbReference type="InterPro" id="IPR027359">
    <property type="entry name" value="Volt_channel_dom_sf"/>
</dbReference>
<dbReference type="PANTHER" id="PTHR11537:SF24">
    <property type="entry name" value="POTASSIUM VOLTAGE-GATED CHANNEL SUBFAMILY A MEMBER 1"/>
    <property type="match status" value="1"/>
</dbReference>
<dbReference type="PANTHER" id="PTHR11537">
    <property type="entry name" value="VOLTAGE-GATED POTASSIUM CHANNEL"/>
    <property type="match status" value="1"/>
</dbReference>
<dbReference type="Pfam" id="PF02214">
    <property type="entry name" value="BTB_2"/>
    <property type="match status" value="1"/>
</dbReference>
<dbReference type="Pfam" id="PF00520">
    <property type="entry name" value="Ion_trans"/>
    <property type="match status" value="1"/>
</dbReference>
<dbReference type="PRINTS" id="PR00169">
    <property type="entry name" value="KCHANNEL"/>
</dbReference>
<dbReference type="PRINTS" id="PR01508">
    <property type="entry name" value="KV11CHANNEL"/>
</dbReference>
<dbReference type="PRINTS" id="PR01491">
    <property type="entry name" value="KVCHANNEL"/>
</dbReference>
<dbReference type="PRINTS" id="PR01496">
    <property type="entry name" value="SHAKERCHANEL"/>
</dbReference>
<dbReference type="SMART" id="SM00225">
    <property type="entry name" value="BTB"/>
    <property type="match status" value="1"/>
</dbReference>
<dbReference type="SUPFAM" id="SSF54695">
    <property type="entry name" value="POZ domain"/>
    <property type="match status" value="1"/>
</dbReference>
<dbReference type="SUPFAM" id="SSF81324">
    <property type="entry name" value="Voltage-gated potassium channels"/>
    <property type="match status" value="1"/>
</dbReference>
<organism>
    <name type="scientific">Mus musculus</name>
    <name type="common">Mouse</name>
    <dbReference type="NCBI Taxonomy" id="10090"/>
    <lineage>
        <taxon>Eukaryota</taxon>
        <taxon>Metazoa</taxon>
        <taxon>Chordata</taxon>
        <taxon>Craniata</taxon>
        <taxon>Vertebrata</taxon>
        <taxon>Euteleostomi</taxon>
        <taxon>Mammalia</taxon>
        <taxon>Eutheria</taxon>
        <taxon>Euarchontoglires</taxon>
        <taxon>Glires</taxon>
        <taxon>Rodentia</taxon>
        <taxon>Myomorpha</taxon>
        <taxon>Muroidea</taxon>
        <taxon>Muridae</taxon>
        <taxon>Murinae</taxon>
        <taxon>Mus</taxon>
        <taxon>Mus</taxon>
    </lineage>
</organism>
<sequence>MTVMSGENADEASTAPGHPQDGSYPRQADHDDHECCERVVINISGLRFETQLKTLAQFPNTLLGNPKKRMRYFDPLRNEYFFDRNRPSFDAILYYYQSGGRLRRPVNVPLDMFSEEIKFYELGEEAMEKFREDEGFIKEEERPLPEKEYQRQVWLLFEYPESSGPARVIAIVSVMVILISIVIFCLETLPELKDDKDFTGTIHRIDNTTVIYTSNIFTDPFFIVETLCIIWFSFELVVRFFACPSKTDFFKNIMNFIDIVAIIPYFITLGTEIAEQEGNQKGEQATSLAILRVIRLVRVFRIFKLSRHSKGLQILGQTLKASMRELGLLIFFLFIGVILFSSAVYFAEAEEAESHFSSIPDAFWWAVVSMTTVGYGDMYPVTIGGKIVGSLCAIAGVLTIALPVPVIVSNFNYFYHRETEGEEQAQLLHVSSPNLASDSDLSRRSSSTISKSEYMEIEEDMNNSIAHYRQANIRTGNCTTADQNCVNKSKLLTDV</sequence>
<evidence type="ECO:0000250" key="1"/>
<evidence type="ECO:0000250" key="2">
    <source>
        <dbReference type="UniProtKB" id="P10499"/>
    </source>
</evidence>
<evidence type="ECO:0000250" key="3">
    <source>
        <dbReference type="UniProtKB" id="P63142"/>
    </source>
</evidence>
<evidence type="ECO:0000250" key="4">
    <source>
        <dbReference type="UniProtKB" id="Q09470"/>
    </source>
</evidence>
<evidence type="ECO:0000255" key="5"/>
<evidence type="ECO:0000256" key="6">
    <source>
        <dbReference type="SAM" id="MobiDB-lite"/>
    </source>
</evidence>
<evidence type="ECO:0000269" key="7">
    <source>
    </source>
</evidence>
<evidence type="ECO:0000269" key="8">
    <source>
    </source>
</evidence>
<evidence type="ECO:0000269" key="9">
    <source>
    </source>
</evidence>
<evidence type="ECO:0000269" key="10">
    <source>
    </source>
</evidence>
<evidence type="ECO:0000269" key="11">
    <source>
    </source>
</evidence>
<evidence type="ECO:0000269" key="12">
    <source>
    </source>
</evidence>
<evidence type="ECO:0000269" key="13">
    <source>
    </source>
</evidence>
<evidence type="ECO:0000269" key="14">
    <source>
    </source>
</evidence>
<evidence type="ECO:0000269" key="15">
    <source>
    </source>
</evidence>
<evidence type="ECO:0000269" key="16">
    <source>
    </source>
</evidence>
<evidence type="ECO:0000269" key="17">
    <source>
    </source>
</evidence>
<evidence type="ECO:0000269" key="18">
    <source>
    </source>
</evidence>
<evidence type="ECO:0000269" key="19">
    <source>
    </source>
</evidence>
<evidence type="ECO:0000269" key="20">
    <source>
    </source>
</evidence>
<evidence type="ECO:0000269" key="21">
    <source>
    </source>
</evidence>
<evidence type="ECO:0000269" key="22">
    <source>
    </source>
</evidence>
<evidence type="ECO:0000269" key="23">
    <source>
    </source>
</evidence>
<evidence type="ECO:0000269" key="24">
    <source>
    </source>
</evidence>
<evidence type="ECO:0000269" key="25">
    <source>
    </source>
</evidence>
<evidence type="ECO:0000269" key="26">
    <source>
    </source>
</evidence>
<evidence type="ECO:0000269" key="27">
    <source>
    </source>
</evidence>
<evidence type="ECO:0000269" key="28">
    <source>
    </source>
</evidence>
<evidence type="ECO:0000269" key="29">
    <source>
    </source>
</evidence>
<evidence type="ECO:0000269" key="30">
    <source>
    </source>
</evidence>
<evidence type="ECO:0000269" key="31">
    <source>
    </source>
</evidence>
<evidence type="ECO:0000269" key="32">
    <source>
    </source>
</evidence>
<evidence type="ECO:0000269" key="33">
    <source>
    </source>
</evidence>
<evidence type="ECO:0000269" key="34">
    <source>
    </source>
</evidence>
<evidence type="ECO:0000303" key="35">
    <source>
    </source>
</evidence>
<evidence type="ECO:0000303" key="36">
    <source>
    </source>
</evidence>
<evidence type="ECO:0000305" key="37"/>
<evidence type="ECO:0000305" key="38">
    <source>
    </source>
</evidence>
<evidence type="ECO:0000312" key="39">
    <source>
        <dbReference type="MGI" id="MGI:96654"/>
    </source>
</evidence>
<accession>P16388</accession>
<keyword id="KW-0965">Cell junction</keyword>
<keyword id="KW-1003">Cell membrane</keyword>
<keyword id="KW-0966">Cell projection</keyword>
<keyword id="KW-0968">Cytoplasmic vesicle</keyword>
<keyword id="KW-0256">Endoplasmic reticulum</keyword>
<keyword id="KW-0325">Glycoprotein</keyword>
<keyword id="KW-0407">Ion channel</keyword>
<keyword id="KW-0406">Ion transport</keyword>
<keyword id="KW-0449">Lipoprotein</keyword>
<keyword id="KW-0472">Membrane</keyword>
<keyword id="KW-0564">Palmitate</keyword>
<keyword id="KW-0597">Phosphoprotein</keyword>
<keyword id="KW-0630">Potassium</keyword>
<keyword id="KW-0631">Potassium channel</keyword>
<keyword id="KW-0633">Potassium transport</keyword>
<keyword id="KW-1185">Reference proteome</keyword>
<keyword id="KW-0691">RNA editing</keyword>
<keyword id="KW-0770">Synapse</keyword>
<keyword id="KW-0812">Transmembrane</keyword>
<keyword id="KW-1133">Transmembrane helix</keyword>
<keyword id="KW-0813">Transport</keyword>
<keyword id="KW-0851">Voltage-gated channel</keyword>
<feature type="chain" id="PRO_0000053969" description="Potassium voltage-gated channel subfamily A member 1">
    <location>
        <begin position="1"/>
        <end position="495"/>
    </location>
</feature>
<feature type="topological domain" description="Cytoplasmic" evidence="3">
    <location>
        <begin position="1"/>
        <end position="164"/>
    </location>
</feature>
<feature type="transmembrane region" description="Helical; Name=Segment S1" evidence="3">
    <location>
        <begin position="165"/>
        <end position="186"/>
    </location>
</feature>
<feature type="topological domain" description="Extracellular" evidence="3">
    <location>
        <begin position="187"/>
        <end position="220"/>
    </location>
</feature>
<feature type="transmembrane region" description="Helical; Name=Segment S2" evidence="3">
    <location>
        <begin position="221"/>
        <end position="242"/>
    </location>
</feature>
<feature type="topological domain" description="Cytoplasmic" evidence="3">
    <location>
        <begin position="243"/>
        <end position="253"/>
    </location>
</feature>
<feature type="transmembrane region" description="Helical; Name=Segment S3" evidence="3">
    <location>
        <begin position="254"/>
        <end position="274"/>
    </location>
</feature>
<feature type="topological domain" description="Extracellular" evidence="3">
    <location>
        <begin position="275"/>
        <end position="287"/>
    </location>
</feature>
<feature type="transmembrane region" description="Helical; Voltage-sensor; Name=Segment S4" evidence="3">
    <location>
        <begin position="288"/>
        <end position="308"/>
    </location>
</feature>
<feature type="topological domain" description="Cytoplasmic" evidence="3">
    <location>
        <begin position="309"/>
        <end position="323"/>
    </location>
</feature>
<feature type="transmembrane region" description="Helical; Name=Segment S5" evidence="3">
    <location>
        <begin position="324"/>
        <end position="345"/>
    </location>
</feature>
<feature type="topological domain" description="Extracellular" evidence="3">
    <location>
        <begin position="346"/>
        <end position="359"/>
    </location>
</feature>
<feature type="intramembrane region" description="Helical; Name=Pore helix" evidence="3">
    <location>
        <begin position="360"/>
        <end position="371"/>
    </location>
</feature>
<feature type="intramembrane region" evidence="3">
    <location>
        <begin position="372"/>
        <end position="379"/>
    </location>
</feature>
<feature type="topological domain" description="Extracellular" evidence="3">
    <location>
        <begin position="380"/>
        <end position="386"/>
    </location>
</feature>
<feature type="transmembrane region" description="Helical; Name=Segment S6" evidence="3">
    <location>
        <begin position="387"/>
        <end position="415"/>
    </location>
</feature>
<feature type="topological domain" description="Cytoplasmic" evidence="3">
    <location>
        <begin position="416"/>
        <end position="495"/>
    </location>
</feature>
<feature type="region of interest" description="Tetramerization domain" evidence="2">
    <location>
        <begin position="1"/>
        <end position="128"/>
    </location>
</feature>
<feature type="region of interest" description="Disordered" evidence="6">
    <location>
        <begin position="1"/>
        <end position="30"/>
    </location>
</feature>
<feature type="region of interest" description="S4-S5 linker" evidence="3">
    <location>
        <begin position="310"/>
        <end position="323"/>
    </location>
</feature>
<feature type="short sequence motif" description="Selectivity filter" evidence="3">
    <location>
        <begin position="372"/>
        <end position="377"/>
    </location>
</feature>
<feature type="short sequence motif" description="PDZ-binding" evidence="1">
    <location>
        <begin position="493"/>
        <end position="495"/>
    </location>
</feature>
<feature type="modified residue" description="Phosphoserine" evidence="2">
    <location>
        <position position="23"/>
    </location>
</feature>
<feature type="modified residue" description="Phosphoserine; by PKA" evidence="5">
    <location>
        <position position="322"/>
    </location>
</feature>
<feature type="modified residue" description="Phosphoserine" evidence="2">
    <location>
        <position position="437"/>
    </location>
</feature>
<feature type="modified residue" description="Phosphoserine" evidence="2">
    <location>
        <position position="439"/>
    </location>
</feature>
<feature type="modified residue" description="Phosphoserine; by PKA" evidence="4">
    <location>
        <position position="446"/>
    </location>
</feature>
<feature type="lipid moiety-binding region" description="S-palmitoyl cysteine" evidence="4">
    <location>
        <position position="243"/>
    </location>
</feature>
<feature type="glycosylation site" description="N-linked (GlcNAc...) asparagine" evidence="5">
    <location>
        <position position="207"/>
    </location>
</feature>
<feature type="sequence variant" description="In RNA edited version.">
    <original>I</original>
    <variation>V</variation>
    <location>
        <position position="400"/>
    </location>
</feature>
<gene>
    <name evidence="39" type="primary">Kcna1</name>
</gene>
<name>KCNA1_MOUSE</name>
<proteinExistence type="evidence at protein level"/>